<name>SECA_SYNWW</name>
<evidence type="ECO:0000255" key="1">
    <source>
        <dbReference type="HAMAP-Rule" id="MF_01382"/>
    </source>
</evidence>
<protein>
    <recommendedName>
        <fullName evidence="1">Protein translocase subunit SecA</fullName>
        <ecNumber evidence="1">7.4.2.8</ecNumber>
    </recommendedName>
</protein>
<accession>Q0B0B4</accession>
<dbReference type="EC" id="7.4.2.8" evidence="1"/>
<dbReference type="EMBL" id="CP000448">
    <property type="protein sequence ID" value="ABI67590.1"/>
    <property type="molecule type" value="Genomic_DNA"/>
</dbReference>
<dbReference type="RefSeq" id="WP_011639699.1">
    <property type="nucleotide sequence ID" value="NC_008346.1"/>
</dbReference>
<dbReference type="SMR" id="Q0B0B4"/>
<dbReference type="STRING" id="335541.Swol_0238"/>
<dbReference type="KEGG" id="swo:Swol_0238"/>
<dbReference type="eggNOG" id="COG0653">
    <property type="taxonomic scope" value="Bacteria"/>
</dbReference>
<dbReference type="HOGENOM" id="CLU_005314_3_0_9"/>
<dbReference type="OrthoDB" id="9805579at2"/>
<dbReference type="Proteomes" id="UP000001968">
    <property type="component" value="Chromosome"/>
</dbReference>
<dbReference type="GO" id="GO:0031522">
    <property type="term" value="C:cell envelope Sec protein transport complex"/>
    <property type="evidence" value="ECO:0007669"/>
    <property type="project" value="TreeGrafter"/>
</dbReference>
<dbReference type="GO" id="GO:0005829">
    <property type="term" value="C:cytosol"/>
    <property type="evidence" value="ECO:0007669"/>
    <property type="project" value="TreeGrafter"/>
</dbReference>
<dbReference type="GO" id="GO:0005886">
    <property type="term" value="C:plasma membrane"/>
    <property type="evidence" value="ECO:0007669"/>
    <property type="project" value="UniProtKB-SubCell"/>
</dbReference>
<dbReference type="GO" id="GO:0005524">
    <property type="term" value="F:ATP binding"/>
    <property type="evidence" value="ECO:0007669"/>
    <property type="project" value="UniProtKB-UniRule"/>
</dbReference>
<dbReference type="GO" id="GO:0046872">
    <property type="term" value="F:metal ion binding"/>
    <property type="evidence" value="ECO:0007669"/>
    <property type="project" value="UniProtKB-KW"/>
</dbReference>
<dbReference type="GO" id="GO:0008564">
    <property type="term" value="F:protein-exporting ATPase activity"/>
    <property type="evidence" value="ECO:0007669"/>
    <property type="project" value="UniProtKB-EC"/>
</dbReference>
<dbReference type="GO" id="GO:0065002">
    <property type="term" value="P:intracellular protein transmembrane transport"/>
    <property type="evidence" value="ECO:0007669"/>
    <property type="project" value="UniProtKB-UniRule"/>
</dbReference>
<dbReference type="GO" id="GO:0017038">
    <property type="term" value="P:protein import"/>
    <property type="evidence" value="ECO:0007669"/>
    <property type="project" value="InterPro"/>
</dbReference>
<dbReference type="GO" id="GO:0006605">
    <property type="term" value="P:protein targeting"/>
    <property type="evidence" value="ECO:0007669"/>
    <property type="project" value="UniProtKB-UniRule"/>
</dbReference>
<dbReference type="GO" id="GO:0043952">
    <property type="term" value="P:protein transport by the Sec complex"/>
    <property type="evidence" value="ECO:0007669"/>
    <property type="project" value="TreeGrafter"/>
</dbReference>
<dbReference type="CDD" id="cd17928">
    <property type="entry name" value="DEXDc_SecA"/>
    <property type="match status" value="1"/>
</dbReference>
<dbReference type="CDD" id="cd18803">
    <property type="entry name" value="SF2_C_secA"/>
    <property type="match status" value="1"/>
</dbReference>
<dbReference type="FunFam" id="1.10.3060.10:FF:000002">
    <property type="entry name" value="Preprotein translocase subunit SecA"/>
    <property type="match status" value="1"/>
</dbReference>
<dbReference type="FunFam" id="3.40.50.300:FF:000429">
    <property type="entry name" value="Preprotein translocase subunit SecA"/>
    <property type="match status" value="1"/>
</dbReference>
<dbReference type="FunFam" id="3.90.1440.10:FF:000001">
    <property type="entry name" value="Preprotein translocase subunit SecA"/>
    <property type="match status" value="1"/>
</dbReference>
<dbReference type="FunFam" id="3.40.50.300:FF:000334">
    <property type="entry name" value="Protein translocase subunit SecA"/>
    <property type="match status" value="1"/>
</dbReference>
<dbReference type="Gene3D" id="1.10.3060.10">
    <property type="entry name" value="Helical scaffold and wing domains of SecA"/>
    <property type="match status" value="1"/>
</dbReference>
<dbReference type="Gene3D" id="3.40.50.300">
    <property type="entry name" value="P-loop containing nucleotide triphosphate hydrolases"/>
    <property type="match status" value="3"/>
</dbReference>
<dbReference type="Gene3D" id="3.90.1440.10">
    <property type="entry name" value="SecA, preprotein cross-linking domain"/>
    <property type="match status" value="1"/>
</dbReference>
<dbReference type="HAMAP" id="MF_01382">
    <property type="entry name" value="SecA"/>
    <property type="match status" value="1"/>
</dbReference>
<dbReference type="InterPro" id="IPR014001">
    <property type="entry name" value="Helicase_ATP-bd"/>
</dbReference>
<dbReference type="InterPro" id="IPR001650">
    <property type="entry name" value="Helicase_C-like"/>
</dbReference>
<dbReference type="InterPro" id="IPR027417">
    <property type="entry name" value="P-loop_NTPase"/>
</dbReference>
<dbReference type="InterPro" id="IPR004027">
    <property type="entry name" value="SEC_C_motif"/>
</dbReference>
<dbReference type="InterPro" id="IPR000185">
    <property type="entry name" value="SecA"/>
</dbReference>
<dbReference type="InterPro" id="IPR020937">
    <property type="entry name" value="SecA_CS"/>
</dbReference>
<dbReference type="InterPro" id="IPR011115">
    <property type="entry name" value="SecA_DEAD"/>
</dbReference>
<dbReference type="InterPro" id="IPR014018">
    <property type="entry name" value="SecA_motor_DEAD"/>
</dbReference>
<dbReference type="InterPro" id="IPR011130">
    <property type="entry name" value="SecA_preprotein_X-link_dom"/>
</dbReference>
<dbReference type="InterPro" id="IPR044722">
    <property type="entry name" value="SecA_SF2_C"/>
</dbReference>
<dbReference type="InterPro" id="IPR011116">
    <property type="entry name" value="SecA_Wing/Scaffold"/>
</dbReference>
<dbReference type="InterPro" id="IPR036266">
    <property type="entry name" value="SecA_Wing/Scaffold_sf"/>
</dbReference>
<dbReference type="InterPro" id="IPR036670">
    <property type="entry name" value="SecA_X-link_sf"/>
</dbReference>
<dbReference type="NCBIfam" id="NF006630">
    <property type="entry name" value="PRK09200.1"/>
    <property type="match status" value="1"/>
</dbReference>
<dbReference type="NCBIfam" id="NF009538">
    <property type="entry name" value="PRK12904.1"/>
    <property type="match status" value="1"/>
</dbReference>
<dbReference type="NCBIfam" id="TIGR00963">
    <property type="entry name" value="secA"/>
    <property type="match status" value="1"/>
</dbReference>
<dbReference type="PANTHER" id="PTHR30612:SF0">
    <property type="entry name" value="CHLOROPLAST PROTEIN-TRANSPORTING ATPASE"/>
    <property type="match status" value="1"/>
</dbReference>
<dbReference type="PANTHER" id="PTHR30612">
    <property type="entry name" value="SECA INNER MEMBRANE COMPONENT OF SEC PROTEIN SECRETION SYSTEM"/>
    <property type="match status" value="1"/>
</dbReference>
<dbReference type="Pfam" id="PF21090">
    <property type="entry name" value="P-loop_SecA"/>
    <property type="match status" value="1"/>
</dbReference>
<dbReference type="Pfam" id="PF02810">
    <property type="entry name" value="SEC-C"/>
    <property type="match status" value="1"/>
</dbReference>
<dbReference type="Pfam" id="PF07517">
    <property type="entry name" value="SecA_DEAD"/>
    <property type="match status" value="1"/>
</dbReference>
<dbReference type="Pfam" id="PF01043">
    <property type="entry name" value="SecA_PP_bind"/>
    <property type="match status" value="1"/>
</dbReference>
<dbReference type="Pfam" id="PF07516">
    <property type="entry name" value="SecA_SW"/>
    <property type="match status" value="1"/>
</dbReference>
<dbReference type="PRINTS" id="PR00906">
    <property type="entry name" value="SECA"/>
</dbReference>
<dbReference type="SMART" id="SM00957">
    <property type="entry name" value="SecA_DEAD"/>
    <property type="match status" value="1"/>
</dbReference>
<dbReference type="SMART" id="SM00958">
    <property type="entry name" value="SecA_PP_bind"/>
    <property type="match status" value="1"/>
</dbReference>
<dbReference type="SUPFAM" id="SSF81886">
    <property type="entry name" value="Helical scaffold and wing domains of SecA"/>
    <property type="match status" value="1"/>
</dbReference>
<dbReference type="SUPFAM" id="SSF52540">
    <property type="entry name" value="P-loop containing nucleoside triphosphate hydrolases"/>
    <property type="match status" value="2"/>
</dbReference>
<dbReference type="SUPFAM" id="SSF81767">
    <property type="entry name" value="Pre-protein crosslinking domain of SecA"/>
    <property type="match status" value="1"/>
</dbReference>
<dbReference type="PROSITE" id="PS01312">
    <property type="entry name" value="SECA"/>
    <property type="match status" value="1"/>
</dbReference>
<dbReference type="PROSITE" id="PS51196">
    <property type="entry name" value="SECA_MOTOR_DEAD"/>
    <property type="match status" value="1"/>
</dbReference>
<proteinExistence type="inferred from homology"/>
<gene>
    <name evidence="1" type="primary">secA</name>
    <name type="ordered locus">Swol_0238</name>
</gene>
<organism>
    <name type="scientific">Syntrophomonas wolfei subsp. wolfei (strain DSM 2245B / Goettingen)</name>
    <dbReference type="NCBI Taxonomy" id="335541"/>
    <lineage>
        <taxon>Bacteria</taxon>
        <taxon>Bacillati</taxon>
        <taxon>Bacillota</taxon>
        <taxon>Clostridia</taxon>
        <taxon>Eubacteriales</taxon>
        <taxon>Syntrophomonadaceae</taxon>
        <taxon>Syntrophomonas</taxon>
    </lineage>
</organism>
<reference key="1">
    <citation type="journal article" date="2010" name="Environ. Microbiol.">
        <title>The genome of Syntrophomonas wolfei: new insights into syntrophic metabolism and biohydrogen production.</title>
        <authorList>
            <person name="Sieber J.R."/>
            <person name="Sims D.R."/>
            <person name="Han C."/>
            <person name="Kim E."/>
            <person name="Lykidis A."/>
            <person name="Lapidus A.L."/>
            <person name="McDonnald E."/>
            <person name="Rohlin L."/>
            <person name="Culley D.E."/>
            <person name="Gunsalus R."/>
            <person name="McInerney M.J."/>
        </authorList>
    </citation>
    <scope>NUCLEOTIDE SEQUENCE [LARGE SCALE GENOMIC DNA]</scope>
    <source>
        <strain>DSM 2245B / Goettingen</strain>
    </source>
</reference>
<comment type="function">
    <text evidence="1">Part of the Sec protein translocase complex. Interacts with the SecYEG preprotein conducting channel. Has a central role in coupling the hydrolysis of ATP to the transfer of proteins into and across the cell membrane, serving as an ATP-driven molecular motor driving the stepwise translocation of polypeptide chains across the membrane.</text>
</comment>
<comment type="catalytic activity">
    <reaction evidence="1">
        <text>ATP + H2O + cellular proteinSide 1 = ADP + phosphate + cellular proteinSide 2.</text>
        <dbReference type="EC" id="7.4.2.8"/>
    </reaction>
</comment>
<comment type="cofactor">
    <cofactor evidence="1">
        <name>Zn(2+)</name>
        <dbReference type="ChEBI" id="CHEBI:29105"/>
    </cofactor>
    <text evidence="1">May bind 1 zinc ion per subunit.</text>
</comment>
<comment type="subunit">
    <text evidence="1">Monomer and homodimer. Part of the essential Sec protein translocation apparatus which comprises SecA, SecYEG and auxiliary proteins SecDF. Other proteins may also be involved.</text>
</comment>
<comment type="subcellular location">
    <subcellularLocation>
        <location evidence="1">Cell membrane</location>
        <topology evidence="1">Peripheral membrane protein</topology>
        <orientation evidence="1">Cytoplasmic side</orientation>
    </subcellularLocation>
    <subcellularLocation>
        <location evidence="1">Cytoplasm</location>
    </subcellularLocation>
    <text evidence="1">Distribution is 50-50.</text>
</comment>
<comment type="similarity">
    <text evidence="1">Belongs to the SecA family.</text>
</comment>
<keyword id="KW-0067">ATP-binding</keyword>
<keyword id="KW-1003">Cell membrane</keyword>
<keyword id="KW-0963">Cytoplasm</keyword>
<keyword id="KW-0472">Membrane</keyword>
<keyword id="KW-0479">Metal-binding</keyword>
<keyword id="KW-0547">Nucleotide-binding</keyword>
<keyword id="KW-0653">Protein transport</keyword>
<keyword id="KW-1185">Reference proteome</keyword>
<keyword id="KW-1278">Translocase</keyword>
<keyword id="KW-0811">Translocation</keyword>
<keyword id="KW-0813">Transport</keyword>
<keyword id="KW-0862">Zinc</keyword>
<feature type="chain" id="PRO_0000321021" description="Protein translocase subunit SecA">
    <location>
        <begin position="1"/>
        <end position="830"/>
    </location>
</feature>
<feature type="binding site" evidence="1">
    <location>
        <position position="86"/>
    </location>
    <ligand>
        <name>ATP</name>
        <dbReference type="ChEBI" id="CHEBI:30616"/>
    </ligand>
</feature>
<feature type="binding site" evidence="1">
    <location>
        <begin position="104"/>
        <end position="108"/>
    </location>
    <ligand>
        <name>ATP</name>
        <dbReference type="ChEBI" id="CHEBI:30616"/>
    </ligand>
</feature>
<feature type="binding site" evidence="1">
    <location>
        <position position="491"/>
    </location>
    <ligand>
        <name>ATP</name>
        <dbReference type="ChEBI" id="CHEBI:30616"/>
    </ligand>
</feature>
<feature type="binding site" evidence="1">
    <location>
        <position position="813"/>
    </location>
    <ligand>
        <name>Zn(2+)</name>
        <dbReference type="ChEBI" id="CHEBI:29105"/>
    </ligand>
</feature>
<feature type="binding site" evidence="1">
    <location>
        <position position="815"/>
    </location>
    <ligand>
        <name>Zn(2+)</name>
        <dbReference type="ChEBI" id="CHEBI:29105"/>
    </ligand>
</feature>
<feature type="binding site" evidence="1">
    <location>
        <position position="824"/>
    </location>
    <ligand>
        <name>Zn(2+)</name>
        <dbReference type="ChEBI" id="CHEBI:29105"/>
    </ligand>
</feature>
<feature type="binding site" evidence="1">
    <location>
        <position position="825"/>
    </location>
    <ligand>
        <name>Zn(2+)</name>
        <dbReference type="ChEBI" id="CHEBI:29105"/>
    </ligand>
</feature>
<sequence>MIKSLLKSLLDDDEREVKKLRRTVEVINSLEAEFQELAEEEFPQKTGEFKERLKNGEELDDILPEAFALVREASQRVLGMRHFDVQLIGGMVLHQGRIAEMKTGEGKTLVATLPAYLNALEGKGVHIVTVNDYLAARDADWMGPVLEYCGLSVGLIVHGLSYEERKAAYACDVTYGTNNEMGFDYLRDNMVVSADNMVQRELHYAIIDEVDSILVDEARTPLIISGEGDKPTTLYYQIAKFIPRLRNEEDYKVDEKAHVVTLTEEGVKKVEKYFTIENLSENMELAHHVNQGLKAHSLMKRDRDYVIKDEQVIIVDEFTGRLMFGRRYSDGLHQAIEAKEGVKIEKESQTLATITFQNYFRMYHKLGGMTGTAKTEEEEFRKIYGMDVVSIPTHNPMIREDQADMVYRTEEGKFRAVVEDIISRHQAKQPVLVGTISVEKSEYLSAMLAKRGVKHQVLNAKYHEKEAQIIAQAGQEETVTIATNMAGRGTDIVLGEGIQELGGLYVLGTERHESRRIDNQLRGRSGRQGDPGESRFYVSLEDDLMRLFGSANVEGLMDRLGMDDDMPIEHKMISRAIESAQKKVEARNFSIRKNVLEYDDVINQQREVMYGERRKVLFGEDLKETVASMVDDVIEQAVERFAGEFKYSDEWDLPGFLSYIEQSIIPQPDFNQEDMRGMRKNEVVAFLAEKTQTLYEQREKEMGSEIMRELEKAILLRIIDEKWMDHIDAMDQLRNGISLRAYGQKDPLIEYKFEAFEAFQMMIESMKEDVVRYIFRVKVVQQPEERKTFENQGEEAEKKPVRVGKKIGRNDLCPCGSGKKYKKCCGRGVS</sequence>